<keyword id="KW-0131">Cell cycle</keyword>
<keyword id="KW-0132">Cell division</keyword>
<keyword id="KW-0175">Coiled coil</keyword>
<keyword id="KW-0963">Cytoplasm</keyword>
<keyword id="KW-0717">Septation</keyword>
<protein>
    <recommendedName>
        <fullName evidence="1">Cell division protein ZapB</fullName>
    </recommendedName>
</protein>
<gene>
    <name evidence="1" type="primary">zapB</name>
    <name type="ordered locus">SPC_4194</name>
</gene>
<accession>C0Q438</accession>
<feature type="chain" id="PRO_1000164518" description="Cell division protein ZapB">
    <location>
        <begin position="1"/>
        <end position="79"/>
    </location>
</feature>
<feature type="region of interest" description="Disordered" evidence="2">
    <location>
        <begin position="36"/>
        <end position="63"/>
    </location>
</feature>
<feature type="coiled-coil region" evidence="1">
    <location>
        <begin position="3"/>
        <end position="79"/>
    </location>
</feature>
<feature type="compositionally biased region" description="Polar residues" evidence="2">
    <location>
        <begin position="36"/>
        <end position="45"/>
    </location>
</feature>
<feature type="compositionally biased region" description="Basic and acidic residues" evidence="2">
    <location>
        <begin position="46"/>
        <end position="57"/>
    </location>
</feature>
<organism>
    <name type="scientific">Salmonella paratyphi C (strain RKS4594)</name>
    <dbReference type="NCBI Taxonomy" id="476213"/>
    <lineage>
        <taxon>Bacteria</taxon>
        <taxon>Pseudomonadati</taxon>
        <taxon>Pseudomonadota</taxon>
        <taxon>Gammaproteobacteria</taxon>
        <taxon>Enterobacterales</taxon>
        <taxon>Enterobacteriaceae</taxon>
        <taxon>Salmonella</taxon>
    </lineage>
</organism>
<comment type="function">
    <text evidence="1">Non-essential, abundant cell division factor that is required for proper Z-ring formation. It is recruited early to the divisome by direct interaction with FtsZ, stimulating Z-ring assembly and thereby promoting cell division earlier in the cell cycle. Its recruitment to the Z-ring requires functional FtsA or ZipA.</text>
</comment>
<comment type="subunit">
    <text evidence="1">Homodimer. The ends of the coiled-coil dimer bind to each other, forming polymers. Interacts with FtsZ.</text>
</comment>
<comment type="subcellular location">
    <subcellularLocation>
        <location evidence="1">Cytoplasm</location>
    </subcellularLocation>
    <text evidence="1">Localizes to the septum at mid-cell, in a FtsZ-like pattern.</text>
</comment>
<comment type="similarity">
    <text evidence="1">Belongs to the ZapB family.</text>
</comment>
<name>ZAPB_SALPC</name>
<sequence>MSLEVFEKLEAKVQQAIDTITLLQMEIEELKEKNNSLTQEVQSAQHQREELERENNSLKEQQSGWQERLQALLGRMEEV</sequence>
<reference key="1">
    <citation type="journal article" date="2009" name="PLoS ONE">
        <title>Salmonella paratyphi C: genetic divergence from Salmonella choleraesuis and pathogenic convergence with Salmonella typhi.</title>
        <authorList>
            <person name="Liu W.-Q."/>
            <person name="Feng Y."/>
            <person name="Wang Y."/>
            <person name="Zou Q.-H."/>
            <person name="Chen F."/>
            <person name="Guo J.-T."/>
            <person name="Peng Y.-H."/>
            <person name="Jin Y."/>
            <person name="Li Y.-G."/>
            <person name="Hu S.-N."/>
            <person name="Johnston R.N."/>
            <person name="Liu G.-R."/>
            <person name="Liu S.-L."/>
        </authorList>
    </citation>
    <scope>NUCLEOTIDE SEQUENCE [LARGE SCALE GENOMIC DNA]</scope>
    <source>
        <strain>RKS4594</strain>
    </source>
</reference>
<dbReference type="EMBL" id="CP000857">
    <property type="protein sequence ID" value="ACN48257.1"/>
    <property type="molecule type" value="Genomic_DNA"/>
</dbReference>
<dbReference type="RefSeq" id="WP_000051370.1">
    <property type="nucleotide sequence ID" value="NC_012125.1"/>
</dbReference>
<dbReference type="SMR" id="C0Q438"/>
<dbReference type="KEGG" id="sei:SPC_4194"/>
<dbReference type="HOGENOM" id="CLU_171174_2_0_6"/>
<dbReference type="Proteomes" id="UP000001599">
    <property type="component" value="Chromosome"/>
</dbReference>
<dbReference type="GO" id="GO:0005737">
    <property type="term" value="C:cytoplasm"/>
    <property type="evidence" value="ECO:0007669"/>
    <property type="project" value="UniProtKB-SubCell"/>
</dbReference>
<dbReference type="GO" id="GO:0000917">
    <property type="term" value="P:division septum assembly"/>
    <property type="evidence" value="ECO:0007669"/>
    <property type="project" value="UniProtKB-KW"/>
</dbReference>
<dbReference type="GO" id="GO:0043093">
    <property type="term" value="P:FtsZ-dependent cytokinesis"/>
    <property type="evidence" value="ECO:0007669"/>
    <property type="project" value="UniProtKB-UniRule"/>
</dbReference>
<dbReference type="FunFam" id="1.20.5.340:FF:000014">
    <property type="entry name" value="Cell division protein ZapB"/>
    <property type="match status" value="1"/>
</dbReference>
<dbReference type="Gene3D" id="1.20.5.340">
    <property type="match status" value="1"/>
</dbReference>
<dbReference type="HAMAP" id="MF_01196">
    <property type="entry name" value="ZapB"/>
    <property type="match status" value="1"/>
</dbReference>
<dbReference type="InterPro" id="IPR009252">
    <property type="entry name" value="Cell_div_ZapB"/>
</dbReference>
<dbReference type="NCBIfam" id="NF011951">
    <property type="entry name" value="PRK15422.1"/>
    <property type="match status" value="1"/>
</dbReference>
<dbReference type="Pfam" id="PF06005">
    <property type="entry name" value="ZapB"/>
    <property type="match status" value="1"/>
</dbReference>
<evidence type="ECO:0000255" key="1">
    <source>
        <dbReference type="HAMAP-Rule" id="MF_01196"/>
    </source>
</evidence>
<evidence type="ECO:0000256" key="2">
    <source>
        <dbReference type="SAM" id="MobiDB-lite"/>
    </source>
</evidence>
<proteinExistence type="inferred from homology"/>